<sequence length="265" mass="27464">MQPDLHCRTLAAHTLKHFRALSPLTHCMTNDVVQTFTANTLLALGASPAMVIDPVEARPFAAIANALLINVGTLTASRADAMRAAVESAYDAKTPWTLDPVAVGVLEFRRRFCLDLLSLRPAAIRGNASEILALAGMALGGRGVDTTEAALAALPAAQALARQIDCIVVVTGEIDYVTNSQRTLSIPGGDPLMTRIVGTGCALSAVVAASCALPGAALDNVASACCWMKLAGQAAAERSEGPGSFIPAFLDALYHLDVEAANATN</sequence>
<protein>
    <recommendedName>
        <fullName evidence="1">Hydroxyethylthiazole kinase</fullName>
        <ecNumber evidence="1">2.7.1.50</ecNumber>
    </recommendedName>
    <alternativeName>
        <fullName evidence="1">4-methyl-5-beta-hydroxyethylthiazole kinase</fullName>
        <shortName evidence="1">TH kinase</shortName>
        <shortName evidence="1">Thz kinase</shortName>
    </alternativeName>
</protein>
<name>THIM_SALPA</name>
<accession>Q5PMV9</accession>
<keyword id="KW-0067">ATP-binding</keyword>
<keyword id="KW-0418">Kinase</keyword>
<keyword id="KW-0460">Magnesium</keyword>
<keyword id="KW-0479">Metal-binding</keyword>
<keyword id="KW-0547">Nucleotide-binding</keyword>
<keyword id="KW-0784">Thiamine biosynthesis</keyword>
<keyword id="KW-0808">Transferase</keyword>
<dbReference type="EC" id="2.7.1.50" evidence="1"/>
<dbReference type="EMBL" id="CP000026">
    <property type="protein sequence ID" value="AAV76703.1"/>
    <property type="molecule type" value="Genomic_DNA"/>
</dbReference>
<dbReference type="RefSeq" id="WP_001182160.1">
    <property type="nucleotide sequence ID" value="NC_006511.1"/>
</dbReference>
<dbReference type="SMR" id="Q5PMV9"/>
<dbReference type="KEGG" id="spt:SPA0705"/>
<dbReference type="HOGENOM" id="CLU_019943_0_1_6"/>
<dbReference type="UniPathway" id="UPA00060">
    <property type="reaction ID" value="UER00139"/>
</dbReference>
<dbReference type="Proteomes" id="UP000008185">
    <property type="component" value="Chromosome"/>
</dbReference>
<dbReference type="GO" id="GO:0005524">
    <property type="term" value="F:ATP binding"/>
    <property type="evidence" value="ECO:0007669"/>
    <property type="project" value="UniProtKB-UniRule"/>
</dbReference>
<dbReference type="GO" id="GO:0004417">
    <property type="term" value="F:hydroxyethylthiazole kinase activity"/>
    <property type="evidence" value="ECO:0007669"/>
    <property type="project" value="UniProtKB-UniRule"/>
</dbReference>
<dbReference type="GO" id="GO:0000287">
    <property type="term" value="F:magnesium ion binding"/>
    <property type="evidence" value="ECO:0007669"/>
    <property type="project" value="UniProtKB-UniRule"/>
</dbReference>
<dbReference type="GO" id="GO:0009228">
    <property type="term" value="P:thiamine biosynthetic process"/>
    <property type="evidence" value="ECO:0007669"/>
    <property type="project" value="UniProtKB-KW"/>
</dbReference>
<dbReference type="GO" id="GO:0009229">
    <property type="term" value="P:thiamine diphosphate biosynthetic process"/>
    <property type="evidence" value="ECO:0007669"/>
    <property type="project" value="UniProtKB-UniRule"/>
</dbReference>
<dbReference type="CDD" id="cd01170">
    <property type="entry name" value="THZ_kinase"/>
    <property type="match status" value="1"/>
</dbReference>
<dbReference type="FunFam" id="3.40.1190.20:FF:000015">
    <property type="entry name" value="Hydroxyethylthiazole kinase"/>
    <property type="match status" value="1"/>
</dbReference>
<dbReference type="Gene3D" id="3.40.1190.20">
    <property type="match status" value="1"/>
</dbReference>
<dbReference type="HAMAP" id="MF_00228">
    <property type="entry name" value="Thz_kinase"/>
    <property type="match status" value="1"/>
</dbReference>
<dbReference type="InterPro" id="IPR000417">
    <property type="entry name" value="Hyethyz_kinase"/>
</dbReference>
<dbReference type="InterPro" id="IPR029056">
    <property type="entry name" value="Ribokinase-like"/>
</dbReference>
<dbReference type="NCBIfam" id="NF006830">
    <property type="entry name" value="PRK09355.1"/>
    <property type="match status" value="1"/>
</dbReference>
<dbReference type="NCBIfam" id="TIGR00694">
    <property type="entry name" value="thiM"/>
    <property type="match status" value="1"/>
</dbReference>
<dbReference type="Pfam" id="PF02110">
    <property type="entry name" value="HK"/>
    <property type="match status" value="1"/>
</dbReference>
<dbReference type="PIRSF" id="PIRSF000513">
    <property type="entry name" value="Thz_kinase"/>
    <property type="match status" value="1"/>
</dbReference>
<dbReference type="PRINTS" id="PR01099">
    <property type="entry name" value="HYETHTZKNASE"/>
</dbReference>
<dbReference type="SUPFAM" id="SSF53613">
    <property type="entry name" value="Ribokinase-like"/>
    <property type="match status" value="1"/>
</dbReference>
<comment type="function">
    <text evidence="1">Catalyzes the phosphorylation of the hydroxyl group of 4-methyl-5-beta-hydroxyethylthiazole (THZ).</text>
</comment>
<comment type="catalytic activity">
    <reaction evidence="1">
        <text>5-(2-hydroxyethyl)-4-methylthiazole + ATP = 4-methyl-5-(2-phosphooxyethyl)-thiazole + ADP + H(+)</text>
        <dbReference type="Rhea" id="RHEA:24212"/>
        <dbReference type="ChEBI" id="CHEBI:15378"/>
        <dbReference type="ChEBI" id="CHEBI:17957"/>
        <dbReference type="ChEBI" id="CHEBI:30616"/>
        <dbReference type="ChEBI" id="CHEBI:58296"/>
        <dbReference type="ChEBI" id="CHEBI:456216"/>
        <dbReference type="EC" id="2.7.1.50"/>
    </reaction>
</comment>
<comment type="cofactor">
    <cofactor evidence="1">
        <name>Mg(2+)</name>
        <dbReference type="ChEBI" id="CHEBI:18420"/>
    </cofactor>
</comment>
<comment type="pathway">
    <text evidence="1">Cofactor biosynthesis; thiamine diphosphate biosynthesis; 4-methyl-5-(2-phosphoethyl)-thiazole from 5-(2-hydroxyethyl)-4-methylthiazole: step 1/1.</text>
</comment>
<comment type="similarity">
    <text evidence="1">Belongs to the Thz kinase family.</text>
</comment>
<organism>
    <name type="scientific">Salmonella paratyphi A (strain ATCC 9150 / SARB42)</name>
    <dbReference type="NCBI Taxonomy" id="295319"/>
    <lineage>
        <taxon>Bacteria</taxon>
        <taxon>Pseudomonadati</taxon>
        <taxon>Pseudomonadota</taxon>
        <taxon>Gammaproteobacteria</taxon>
        <taxon>Enterobacterales</taxon>
        <taxon>Enterobacteriaceae</taxon>
        <taxon>Salmonella</taxon>
    </lineage>
</organism>
<gene>
    <name evidence="1" type="primary">thiM</name>
    <name type="ordered locus">SPA0705</name>
</gene>
<reference key="1">
    <citation type="journal article" date="2004" name="Nat. Genet.">
        <title>Comparison of genome degradation in Paratyphi A and Typhi, human-restricted serovars of Salmonella enterica that cause typhoid.</title>
        <authorList>
            <person name="McClelland M."/>
            <person name="Sanderson K.E."/>
            <person name="Clifton S.W."/>
            <person name="Latreille P."/>
            <person name="Porwollik S."/>
            <person name="Sabo A."/>
            <person name="Meyer R."/>
            <person name="Bieri T."/>
            <person name="Ozersky P."/>
            <person name="McLellan M."/>
            <person name="Harkins C.R."/>
            <person name="Wang C."/>
            <person name="Nguyen C."/>
            <person name="Berghoff A."/>
            <person name="Elliott G."/>
            <person name="Kohlberg S."/>
            <person name="Strong C."/>
            <person name="Du F."/>
            <person name="Carter J."/>
            <person name="Kremizki C."/>
            <person name="Layman D."/>
            <person name="Leonard S."/>
            <person name="Sun H."/>
            <person name="Fulton L."/>
            <person name="Nash W."/>
            <person name="Miner T."/>
            <person name="Minx P."/>
            <person name="Delehaunty K."/>
            <person name="Fronick C."/>
            <person name="Magrini V."/>
            <person name="Nhan M."/>
            <person name="Warren W."/>
            <person name="Florea L."/>
            <person name="Spieth J."/>
            <person name="Wilson R.K."/>
        </authorList>
    </citation>
    <scope>NUCLEOTIDE SEQUENCE [LARGE SCALE GENOMIC DNA]</scope>
    <source>
        <strain>ATCC 9150 / SARB42</strain>
    </source>
</reference>
<proteinExistence type="inferred from homology"/>
<feature type="chain" id="PRO_1000021526" description="Hydroxyethylthiazole kinase">
    <location>
        <begin position="1"/>
        <end position="265"/>
    </location>
</feature>
<feature type="binding site" evidence="1">
    <location>
        <position position="50"/>
    </location>
    <ligand>
        <name>substrate</name>
    </ligand>
</feature>
<feature type="binding site" evidence="1">
    <location>
        <position position="125"/>
    </location>
    <ligand>
        <name>ATP</name>
        <dbReference type="ChEBI" id="CHEBI:30616"/>
    </ligand>
</feature>
<feature type="binding site" evidence="1">
    <location>
        <position position="171"/>
    </location>
    <ligand>
        <name>ATP</name>
        <dbReference type="ChEBI" id="CHEBI:30616"/>
    </ligand>
</feature>
<feature type="binding site" evidence="1">
    <location>
        <position position="198"/>
    </location>
    <ligand>
        <name>substrate</name>
    </ligand>
</feature>
<evidence type="ECO:0000255" key="1">
    <source>
        <dbReference type="HAMAP-Rule" id="MF_00228"/>
    </source>
</evidence>